<protein>
    <recommendedName>
        <fullName evidence="1">Succinyl-diaminopimelate desuccinylase</fullName>
        <shortName evidence="1">SDAP desuccinylase</shortName>
        <ecNumber evidence="1">3.5.1.18</ecNumber>
    </recommendedName>
    <alternativeName>
        <fullName evidence="1">N-succinyl-LL-2,6-diaminoheptanedioate amidohydrolase</fullName>
    </alternativeName>
</protein>
<name>DAPE_BURCH</name>
<organism>
    <name type="scientific">Burkholderia cenocepacia (strain HI2424)</name>
    <dbReference type="NCBI Taxonomy" id="331272"/>
    <lineage>
        <taxon>Bacteria</taxon>
        <taxon>Pseudomonadati</taxon>
        <taxon>Pseudomonadota</taxon>
        <taxon>Betaproteobacteria</taxon>
        <taxon>Burkholderiales</taxon>
        <taxon>Burkholderiaceae</taxon>
        <taxon>Burkholderia</taxon>
        <taxon>Burkholderia cepacia complex</taxon>
    </lineage>
</organism>
<accession>A0K8F6</accession>
<reference key="1">
    <citation type="submission" date="2006-08" db="EMBL/GenBank/DDBJ databases">
        <title>Complete sequence of chromosome 1 of Burkholderia cenocepacia HI2424.</title>
        <authorList>
            <person name="Copeland A."/>
            <person name="Lucas S."/>
            <person name="Lapidus A."/>
            <person name="Barry K."/>
            <person name="Detter J.C."/>
            <person name="Glavina del Rio T."/>
            <person name="Hammon N."/>
            <person name="Israni S."/>
            <person name="Pitluck S."/>
            <person name="Chain P."/>
            <person name="Malfatti S."/>
            <person name="Shin M."/>
            <person name="Vergez L."/>
            <person name="Schmutz J."/>
            <person name="Larimer F."/>
            <person name="Land M."/>
            <person name="Hauser L."/>
            <person name="Kyrpides N."/>
            <person name="Kim E."/>
            <person name="LiPuma J.J."/>
            <person name="Gonzalez C.F."/>
            <person name="Konstantinidis K."/>
            <person name="Tiedje J.M."/>
            <person name="Richardson P."/>
        </authorList>
    </citation>
    <scope>NUCLEOTIDE SEQUENCE [LARGE SCALE GENOMIC DNA]</scope>
    <source>
        <strain>HI2424</strain>
    </source>
</reference>
<comment type="function">
    <text evidence="1">Catalyzes the hydrolysis of N-succinyl-L,L-diaminopimelic acid (SDAP), forming succinate and LL-2,6-diaminopimelate (DAP), an intermediate involved in the bacterial biosynthesis of lysine and meso-diaminopimelic acid, an essential component of bacterial cell walls.</text>
</comment>
<comment type="catalytic activity">
    <reaction evidence="1">
        <text>N-succinyl-(2S,6S)-2,6-diaminopimelate + H2O = (2S,6S)-2,6-diaminopimelate + succinate</text>
        <dbReference type="Rhea" id="RHEA:22608"/>
        <dbReference type="ChEBI" id="CHEBI:15377"/>
        <dbReference type="ChEBI" id="CHEBI:30031"/>
        <dbReference type="ChEBI" id="CHEBI:57609"/>
        <dbReference type="ChEBI" id="CHEBI:58087"/>
        <dbReference type="EC" id="3.5.1.18"/>
    </reaction>
</comment>
<comment type="cofactor">
    <cofactor evidence="1">
        <name>Zn(2+)</name>
        <dbReference type="ChEBI" id="CHEBI:29105"/>
    </cofactor>
    <cofactor evidence="1">
        <name>Co(2+)</name>
        <dbReference type="ChEBI" id="CHEBI:48828"/>
    </cofactor>
    <text evidence="1">Binds 2 Zn(2+) or Co(2+) ions per subunit.</text>
</comment>
<comment type="pathway">
    <text evidence="1">Amino-acid biosynthesis; L-lysine biosynthesis via DAP pathway; LL-2,6-diaminopimelate from (S)-tetrahydrodipicolinate (succinylase route): step 3/3.</text>
</comment>
<comment type="subunit">
    <text evidence="1">Homodimer.</text>
</comment>
<comment type="similarity">
    <text evidence="1">Belongs to the peptidase M20A family. DapE subfamily.</text>
</comment>
<keyword id="KW-0028">Amino-acid biosynthesis</keyword>
<keyword id="KW-0170">Cobalt</keyword>
<keyword id="KW-0220">Diaminopimelate biosynthesis</keyword>
<keyword id="KW-0378">Hydrolase</keyword>
<keyword id="KW-0457">Lysine biosynthesis</keyword>
<keyword id="KW-0479">Metal-binding</keyword>
<keyword id="KW-0862">Zinc</keyword>
<gene>
    <name evidence="1" type="primary">dapE</name>
    <name type="ordered locus">Bcen2424_2032</name>
</gene>
<proteinExistence type="inferred from homology"/>
<feature type="chain" id="PRO_0000375498" description="Succinyl-diaminopimelate desuccinylase">
    <location>
        <begin position="1"/>
        <end position="379"/>
    </location>
</feature>
<feature type="active site" evidence="1">
    <location>
        <position position="72"/>
    </location>
</feature>
<feature type="active site" description="Proton acceptor" evidence="1">
    <location>
        <position position="137"/>
    </location>
</feature>
<feature type="binding site" evidence="1">
    <location>
        <position position="70"/>
    </location>
    <ligand>
        <name>Zn(2+)</name>
        <dbReference type="ChEBI" id="CHEBI:29105"/>
        <label>1</label>
    </ligand>
</feature>
<feature type="binding site" evidence="1">
    <location>
        <position position="103"/>
    </location>
    <ligand>
        <name>Zn(2+)</name>
        <dbReference type="ChEBI" id="CHEBI:29105"/>
        <label>1</label>
    </ligand>
</feature>
<feature type="binding site" evidence="1">
    <location>
        <position position="103"/>
    </location>
    <ligand>
        <name>Zn(2+)</name>
        <dbReference type="ChEBI" id="CHEBI:29105"/>
        <label>2</label>
    </ligand>
</feature>
<feature type="binding site" evidence="1">
    <location>
        <position position="138"/>
    </location>
    <ligand>
        <name>Zn(2+)</name>
        <dbReference type="ChEBI" id="CHEBI:29105"/>
        <label>2</label>
    </ligand>
</feature>
<feature type="binding site" evidence="1">
    <location>
        <position position="166"/>
    </location>
    <ligand>
        <name>Zn(2+)</name>
        <dbReference type="ChEBI" id="CHEBI:29105"/>
        <label>1</label>
    </ligand>
</feature>
<feature type="binding site" evidence="1">
    <location>
        <position position="352"/>
    </location>
    <ligand>
        <name>Zn(2+)</name>
        <dbReference type="ChEBI" id="CHEBI:29105"/>
        <label>2</label>
    </ligand>
</feature>
<sequence>MSATLALTEQLIARASVTPDDQHCQQIMTERLAALGFECETIASHGVTNLWAVKRGTDGRDGKLLAFAGHTDVVPTGPLEQWTSPPFVPAHRDGKLYGRGAADMKTSLAAFVVASEEFVAAHPDHRGAIAFLITSDEEGPATDGTVKVVELLQERGERLDYCIVGEPTSTAELGDVVKNGRRGSMSGELVIKGVQGHIAYPHLAKNPIHLLAPALAELAAEQWDAGNEYFPPTTWQVSNLHAGTGATNVIPGHADLLFNFRFSTASTVEGLQARVHAILDKHGLEYTLKWSVSGLPFLTPRGELSGALEHAIRTETGITTELSTTGGTSDGRFIARICPQVIEFGPPNGSIHKIDEHIEVRFVDPLKNVYRRALEQLIA</sequence>
<dbReference type="EC" id="3.5.1.18" evidence="1"/>
<dbReference type="EMBL" id="CP000458">
    <property type="protein sequence ID" value="ABK08783.1"/>
    <property type="molecule type" value="Genomic_DNA"/>
</dbReference>
<dbReference type="RefSeq" id="WP_011549531.1">
    <property type="nucleotide sequence ID" value="NC_008542.1"/>
</dbReference>
<dbReference type="SMR" id="A0K8F6"/>
<dbReference type="KEGG" id="bch:Bcen2424_2032"/>
<dbReference type="HOGENOM" id="CLU_021802_4_0_4"/>
<dbReference type="UniPathway" id="UPA00034">
    <property type="reaction ID" value="UER00021"/>
</dbReference>
<dbReference type="GO" id="GO:0008777">
    <property type="term" value="F:acetylornithine deacetylase activity"/>
    <property type="evidence" value="ECO:0007669"/>
    <property type="project" value="TreeGrafter"/>
</dbReference>
<dbReference type="GO" id="GO:0050897">
    <property type="term" value="F:cobalt ion binding"/>
    <property type="evidence" value="ECO:0007669"/>
    <property type="project" value="UniProtKB-UniRule"/>
</dbReference>
<dbReference type="GO" id="GO:0009014">
    <property type="term" value="F:succinyl-diaminopimelate desuccinylase activity"/>
    <property type="evidence" value="ECO:0007669"/>
    <property type="project" value="UniProtKB-UniRule"/>
</dbReference>
<dbReference type="GO" id="GO:0008270">
    <property type="term" value="F:zinc ion binding"/>
    <property type="evidence" value="ECO:0007669"/>
    <property type="project" value="UniProtKB-UniRule"/>
</dbReference>
<dbReference type="GO" id="GO:0019877">
    <property type="term" value="P:diaminopimelate biosynthetic process"/>
    <property type="evidence" value="ECO:0007669"/>
    <property type="project" value="UniProtKB-UniRule"/>
</dbReference>
<dbReference type="GO" id="GO:0006526">
    <property type="term" value="P:L-arginine biosynthetic process"/>
    <property type="evidence" value="ECO:0007669"/>
    <property type="project" value="TreeGrafter"/>
</dbReference>
<dbReference type="GO" id="GO:0009089">
    <property type="term" value="P:lysine biosynthetic process via diaminopimelate"/>
    <property type="evidence" value="ECO:0007669"/>
    <property type="project" value="UniProtKB-UniRule"/>
</dbReference>
<dbReference type="CDD" id="cd03891">
    <property type="entry name" value="M20_DapE_proteobac"/>
    <property type="match status" value="1"/>
</dbReference>
<dbReference type="FunFam" id="3.30.70.360:FF:000011">
    <property type="entry name" value="Succinyl-diaminopimelate desuccinylase"/>
    <property type="match status" value="1"/>
</dbReference>
<dbReference type="FunFam" id="3.40.630.10:FF:000005">
    <property type="entry name" value="Succinyl-diaminopimelate desuccinylase"/>
    <property type="match status" value="1"/>
</dbReference>
<dbReference type="Gene3D" id="3.40.630.10">
    <property type="entry name" value="Zn peptidases"/>
    <property type="match status" value="2"/>
</dbReference>
<dbReference type="HAMAP" id="MF_01690">
    <property type="entry name" value="DapE"/>
    <property type="match status" value="1"/>
</dbReference>
<dbReference type="InterPro" id="IPR001261">
    <property type="entry name" value="ArgE/DapE_CS"/>
</dbReference>
<dbReference type="InterPro" id="IPR036264">
    <property type="entry name" value="Bact_exopeptidase_dim_dom"/>
</dbReference>
<dbReference type="InterPro" id="IPR005941">
    <property type="entry name" value="DapE_proteobac"/>
</dbReference>
<dbReference type="InterPro" id="IPR002933">
    <property type="entry name" value="Peptidase_M20"/>
</dbReference>
<dbReference type="InterPro" id="IPR011650">
    <property type="entry name" value="Peptidase_M20_dimer"/>
</dbReference>
<dbReference type="InterPro" id="IPR050072">
    <property type="entry name" value="Peptidase_M20A"/>
</dbReference>
<dbReference type="NCBIfam" id="TIGR01246">
    <property type="entry name" value="dapE_proteo"/>
    <property type="match status" value="1"/>
</dbReference>
<dbReference type="NCBIfam" id="NF009557">
    <property type="entry name" value="PRK13009.1"/>
    <property type="match status" value="1"/>
</dbReference>
<dbReference type="PANTHER" id="PTHR43808">
    <property type="entry name" value="ACETYLORNITHINE DEACETYLASE"/>
    <property type="match status" value="1"/>
</dbReference>
<dbReference type="PANTHER" id="PTHR43808:SF31">
    <property type="entry name" value="N-ACETYL-L-CITRULLINE DEACETYLASE"/>
    <property type="match status" value="1"/>
</dbReference>
<dbReference type="Pfam" id="PF07687">
    <property type="entry name" value="M20_dimer"/>
    <property type="match status" value="1"/>
</dbReference>
<dbReference type="Pfam" id="PF01546">
    <property type="entry name" value="Peptidase_M20"/>
    <property type="match status" value="1"/>
</dbReference>
<dbReference type="SUPFAM" id="SSF55031">
    <property type="entry name" value="Bacterial exopeptidase dimerisation domain"/>
    <property type="match status" value="1"/>
</dbReference>
<dbReference type="SUPFAM" id="SSF53187">
    <property type="entry name" value="Zn-dependent exopeptidases"/>
    <property type="match status" value="1"/>
</dbReference>
<dbReference type="PROSITE" id="PS00758">
    <property type="entry name" value="ARGE_DAPE_CPG2_1"/>
    <property type="match status" value="1"/>
</dbReference>
<evidence type="ECO:0000255" key="1">
    <source>
        <dbReference type="HAMAP-Rule" id="MF_01690"/>
    </source>
</evidence>